<feature type="chain" id="PRO_0000204111" description="ETS translocation variant 1">
    <location>
        <begin position="1"/>
        <end position="477"/>
    </location>
</feature>
<feature type="DNA-binding region" description="ETS" evidence="3">
    <location>
        <begin position="335"/>
        <end position="415"/>
    </location>
</feature>
<feature type="region of interest" description="Disordered" evidence="4">
    <location>
        <begin position="128"/>
        <end position="179"/>
    </location>
</feature>
<feature type="modified residue" description="Phosphoserine" evidence="1">
    <location>
        <position position="94"/>
    </location>
</feature>
<feature type="modified residue" description="Phosphoserine; by RPS6KA1 and RPS6KA5" evidence="2">
    <location>
        <position position="191"/>
    </location>
</feature>
<feature type="modified residue" description="Phosphoserine; by RPS6KA1 and RPS6KA5" evidence="2">
    <location>
        <position position="216"/>
    </location>
</feature>
<feature type="cross-link" description="Glycyl lysine isopeptide (Lys-Gly) (interchain with G-Cter in SUMO2)" evidence="2">
    <location>
        <position position="317"/>
    </location>
</feature>
<gene>
    <name evidence="9" type="primary">Etv1</name>
    <name evidence="7" type="synonym">Er81</name>
    <name evidence="9" type="synonym">Etsrp81</name>
</gene>
<organism evidence="10">
    <name type="scientific">Mus musculus</name>
    <name type="common">Mouse</name>
    <dbReference type="NCBI Taxonomy" id="10090"/>
    <lineage>
        <taxon>Eukaryota</taxon>
        <taxon>Metazoa</taxon>
        <taxon>Chordata</taxon>
        <taxon>Craniata</taxon>
        <taxon>Vertebrata</taxon>
        <taxon>Euteleostomi</taxon>
        <taxon>Mammalia</taxon>
        <taxon>Eutheria</taxon>
        <taxon>Euarchontoglires</taxon>
        <taxon>Glires</taxon>
        <taxon>Rodentia</taxon>
        <taxon>Myomorpha</taxon>
        <taxon>Muroidea</taxon>
        <taxon>Muridae</taxon>
        <taxon>Murinae</taxon>
        <taxon>Mus</taxon>
        <taxon>Mus</taxon>
    </lineage>
</organism>
<keyword id="KW-0010">Activator</keyword>
<keyword id="KW-0238">DNA-binding</keyword>
<keyword id="KW-1017">Isopeptide bond</keyword>
<keyword id="KW-0539">Nucleus</keyword>
<keyword id="KW-0597">Phosphoprotein</keyword>
<keyword id="KW-1185">Reference proteome</keyword>
<keyword id="KW-0804">Transcription</keyword>
<keyword id="KW-0805">Transcription regulation</keyword>
<keyword id="KW-0832">Ubl conjugation</keyword>
<protein>
    <recommendedName>
        <fullName evidence="8">ETS translocation variant 1</fullName>
    </recommendedName>
    <alternativeName>
        <fullName evidence="9">Ets-related protein 81</fullName>
    </alternativeName>
</protein>
<reference key="1">
    <citation type="journal article" date="1992" name="Genes Dev.">
        <title>Specificities of protein-protein and protein-DNA interaction of GABP alpha and two newly defined ets-related proteins.</title>
        <authorList>
            <person name="Brown T.A."/>
            <person name="McKnight S.L."/>
        </authorList>
    </citation>
    <scope>NUCLEOTIDE SEQUENCE [MRNA]</scope>
    <scope>FUNCTION</scope>
    <scope>TISSUE SPECIFICITY</scope>
    <source>
        <tissue>Embryo</tissue>
    </source>
</reference>
<reference key="2">
    <citation type="journal article" date="2004" name="Genome Res.">
        <title>The status, quality, and expansion of the NIH full-length cDNA project: the Mammalian Gene Collection (MGC).</title>
        <authorList>
            <consortium name="The MGC Project Team"/>
        </authorList>
    </citation>
    <scope>NUCLEOTIDE SEQUENCE [LARGE SCALE MRNA]</scope>
    <source>
        <strain>NMRI</strain>
        <tissue>Mammary gland</tissue>
    </source>
</reference>
<reference key="3">
    <citation type="journal article" date="2009" name="Nature">
        <title>Gene regulatory logic of dopamine neuron differentiation.</title>
        <authorList>
            <person name="Flames N."/>
            <person name="Hobert O."/>
        </authorList>
    </citation>
    <scope>FUNCTION</scope>
    <scope>DEVELOPMENTAL STAGE</scope>
    <scope>DISRUPTION PHENOTYPE</scope>
</reference>
<reference key="4">
    <citation type="journal article" date="2010" name="Cell">
        <title>A tissue-specific atlas of mouse protein phosphorylation and expression.</title>
        <authorList>
            <person name="Huttlin E.L."/>
            <person name="Jedrychowski M.P."/>
            <person name="Elias J.E."/>
            <person name="Goswami T."/>
            <person name="Rad R."/>
            <person name="Beausoleil S.A."/>
            <person name="Villen J."/>
            <person name="Haas W."/>
            <person name="Sowa M.E."/>
            <person name="Gygi S.P."/>
        </authorList>
    </citation>
    <scope>IDENTIFICATION BY MASS SPECTROMETRY [LARGE SCALE ANALYSIS]</scope>
    <source>
        <tissue>Brain</tissue>
    </source>
</reference>
<accession>P41164</accession>
<comment type="function">
    <text evidence="5 6">Transcriptional activator that binds to DNA sequences containing the consensus pentanucleotide 5'-CGGA[AT]-3' (PubMed:1340465). Required for olfactory dopaminergic neuron differentiation; may directly activate expression of tyrosine hydroxylase (TH) (PubMed:19287374).</text>
</comment>
<comment type="subcellular location">
    <subcellularLocation>
        <location evidence="3">Nucleus</location>
    </subcellularLocation>
</comment>
<comment type="tissue specificity">
    <text evidence="5">Abundant in kidney (PubMed:1340465). Moderate levels seen in the heart, brain, lung, embryo and lower levels seen in spleen, intestine, testis and thymus (PubMed:1340465).</text>
</comment>
<comment type="developmental stage">
    <text evidence="6">Expressed in the dopaminergic neurons of the olfactory bulb at postnatal day 0 (at protein level).</text>
</comment>
<comment type="PTM">
    <text evidence="2">Sumoylated.</text>
</comment>
<comment type="PTM">
    <text evidence="2">Phosphorylated at Ser-191 and Ser-216 by RPS6KA1 and RPS6KA5; phosphorylation activates transcriptional activity.</text>
</comment>
<comment type="disruption phenotype">
    <text evidence="6">Significant reduction in the number of tyrosine hydroxylase (TH)-positive cells in the olfactory bulb.</text>
</comment>
<comment type="similarity">
    <text evidence="8">Belongs to the ETS family.</text>
</comment>
<proteinExistence type="evidence at protein level"/>
<evidence type="ECO:0000250" key="1">
    <source>
        <dbReference type="UniProtKB" id="P43268"/>
    </source>
</evidence>
<evidence type="ECO:0000250" key="2">
    <source>
        <dbReference type="UniProtKB" id="P50549"/>
    </source>
</evidence>
<evidence type="ECO:0000255" key="3">
    <source>
        <dbReference type="PROSITE-ProRule" id="PRU00237"/>
    </source>
</evidence>
<evidence type="ECO:0000256" key="4">
    <source>
        <dbReference type="SAM" id="MobiDB-lite"/>
    </source>
</evidence>
<evidence type="ECO:0000269" key="5">
    <source>
    </source>
</evidence>
<evidence type="ECO:0000269" key="6">
    <source>
    </source>
</evidence>
<evidence type="ECO:0000303" key="7">
    <source>
    </source>
</evidence>
<evidence type="ECO:0000305" key="8"/>
<evidence type="ECO:0000312" key="9">
    <source>
        <dbReference type="MGI" id="MGI:99254"/>
    </source>
</evidence>
<evidence type="ECO:0000312" key="10">
    <source>
        <dbReference type="Proteomes" id="UP000000589"/>
    </source>
</evidence>
<name>ETV1_MOUSE</name>
<sequence length="477" mass="55041">MDGFYDQQVPYVVTNSQRGRNCTEKPTNVRKRKFINRDLAHDSEELFQDLSQLQETWLAEAQVPDNDEQFVPDYQAESLAFHGLPLKIKKEPHSPCSELGSACSQEQPFKFSYGEKCLYNVSAYDQKPQVGMRPSNPPTPSSTPVSPLHHASPNTAHTPKPDRAFPAHLPPSQSIPDSTYPMDHRFRRQLSEPCNSFPPLPTMPREGRPMYQRQMSEPNIPFPPQGFKQEYHDPVYEHTTMVGGAASQSFPPPLMIKQEPRDFAYDSEVPSCHSIYMRQEGFLAHPSRTEGCMFEKGPRQFYDDTCVVPEKFDGDIKQEPGMYREGPTYQRRGSLQLWQFLVALLDDPSNSHFIAWTGRGMEFKLIEPEEVARRWGIQKNRPAMNYDKLSRSLRYYYEKGIMQKVAGERYVYKFVCDPEALFSMAFPDNQRPLLKTDMERHINEEDTVPLSHFDESMTYMPEGGCCNPHPYNEGYVY</sequence>
<dbReference type="EMBL" id="L10426">
    <property type="protein sequence ID" value="AAA20075.1"/>
    <property type="molecule type" value="mRNA"/>
</dbReference>
<dbReference type="EMBL" id="BC005645">
    <property type="protein sequence ID" value="AAH05645.1"/>
    <property type="molecule type" value="mRNA"/>
</dbReference>
<dbReference type="CCDS" id="CCDS49053.1"/>
<dbReference type="PIR" id="B46396">
    <property type="entry name" value="B46396"/>
</dbReference>
<dbReference type="RefSeq" id="NP_031986.1">
    <property type="nucleotide sequence ID" value="NM_007960.5"/>
</dbReference>
<dbReference type="RefSeq" id="XP_006515028.1">
    <property type="nucleotide sequence ID" value="XM_006514965.4"/>
</dbReference>
<dbReference type="SMR" id="P41164"/>
<dbReference type="BioGRID" id="199539">
    <property type="interactions" value="2"/>
</dbReference>
<dbReference type="DIP" id="DIP-60465N"/>
<dbReference type="FunCoup" id="P41164">
    <property type="interactions" value="1782"/>
</dbReference>
<dbReference type="IntAct" id="P41164">
    <property type="interactions" value="1"/>
</dbReference>
<dbReference type="STRING" id="10090.ENSMUSP00000093442"/>
<dbReference type="GlyGen" id="P41164">
    <property type="glycosylation" value="1 site"/>
</dbReference>
<dbReference type="iPTMnet" id="P41164"/>
<dbReference type="PhosphoSitePlus" id="P41164"/>
<dbReference type="PaxDb" id="10090-ENSMUSP00000093442"/>
<dbReference type="ProteomicsDB" id="267662"/>
<dbReference type="Antibodypedia" id="25156">
    <property type="antibodies" value="318 antibodies from 33 providers"/>
</dbReference>
<dbReference type="DNASU" id="14009"/>
<dbReference type="Ensembl" id="ENSMUST00000095767.11">
    <property type="protein sequence ID" value="ENSMUSP00000093442.4"/>
    <property type="gene ID" value="ENSMUSG00000004151.18"/>
</dbReference>
<dbReference type="Ensembl" id="ENSMUST00000162563.8">
    <property type="protein sequence ID" value="ENSMUSP00000125157.2"/>
    <property type="gene ID" value="ENSMUSG00000004151.18"/>
</dbReference>
<dbReference type="GeneID" id="14009"/>
<dbReference type="KEGG" id="mmu:14009"/>
<dbReference type="UCSC" id="uc033gdb.1">
    <property type="organism name" value="mouse"/>
</dbReference>
<dbReference type="AGR" id="MGI:99254"/>
<dbReference type="CTD" id="2115"/>
<dbReference type="MGI" id="MGI:99254">
    <property type="gene designation" value="Etv1"/>
</dbReference>
<dbReference type="VEuPathDB" id="HostDB:ENSMUSG00000004151"/>
<dbReference type="eggNOG" id="KOG3806">
    <property type="taxonomic scope" value="Eukaryota"/>
</dbReference>
<dbReference type="GeneTree" id="ENSGT00940000157123"/>
<dbReference type="HOGENOM" id="CLU_030025_1_0_1"/>
<dbReference type="InParanoid" id="P41164"/>
<dbReference type="OMA" id="DYQAESX"/>
<dbReference type="OrthoDB" id="10067219at2759"/>
<dbReference type="PhylomeDB" id="P41164"/>
<dbReference type="TreeFam" id="TF316214"/>
<dbReference type="BioGRID-ORCS" id="14009">
    <property type="hits" value="1 hit in 78 CRISPR screens"/>
</dbReference>
<dbReference type="ChiTaRS" id="Etv1">
    <property type="organism name" value="mouse"/>
</dbReference>
<dbReference type="PRO" id="PR:P41164"/>
<dbReference type="Proteomes" id="UP000000589">
    <property type="component" value="Chromosome 12"/>
</dbReference>
<dbReference type="RNAct" id="P41164">
    <property type="molecule type" value="protein"/>
</dbReference>
<dbReference type="Bgee" id="ENSMUSG00000004151">
    <property type="expression patterns" value="Expressed in parotid gland and 260 other cell types or tissues"/>
</dbReference>
<dbReference type="ExpressionAtlas" id="P41164">
    <property type="expression patterns" value="baseline and differential"/>
</dbReference>
<dbReference type="GO" id="GO:0005634">
    <property type="term" value="C:nucleus"/>
    <property type="evidence" value="ECO:0007669"/>
    <property type="project" value="UniProtKB-SubCell"/>
</dbReference>
<dbReference type="GO" id="GO:0001228">
    <property type="term" value="F:DNA-binding transcription activator activity, RNA polymerase II-specific"/>
    <property type="evidence" value="ECO:0007669"/>
    <property type="project" value="Ensembl"/>
</dbReference>
<dbReference type="GO" id="GO:0003700">
    <property type="term" value="F:DNA-binding transcription factor activity"/>
    <property type="evidence" value="ECO:0000304"/>
    <property type="project" value="MGI"/>
</dbReference>
<dbReference type="GO" id="GO:0000978">
    <property type="term" value="F:RNA polymerase II cis-regulatory region sequence-specific DNA binding"/>
    <property type="evidence" value="ECO:0007669"/>
    <property type="project" value="Ensembl"/>
</dbReference>
<dbReference type="GO" id="GO:0007411">
    <property type="term" value="P:axon guidance"/>
    <property type="evidence" value="ECO:0000315"/>
    <property type="project" value="MGI"/>
</dbReference>
<dbReference type="GO" id="GO:0007638">
    <property type="term" value="P:mechanosensory behavior"/>
    <property type="evidence" value="ECO:0000315"/>
    <property type="project" value="MGI"/>
</dbReference>
<dbReference type="GO" id="GO:0007517">
    <property type="term" value="P:muscle organ development"/>
    <property type="evidence" value="ECO:0000315"/>
    <property type="project" value="MGI"/>
</dbReference>
<dbReference type="GO" id="GO:0045893">
    <property type="term" value="P:positive regulation of DNA-templated transcription"/>
    <property type="evidence" value="ECO:0000314"/>
    <property type="project" value="MGI"/>
</dbReference>
<dbReference type="FunFam" id="1.10.10.10:FF:000121">
    <property type="entry name" value="ETS translocation variant 5"/>
    <property type="match status" value="1"/>
</dbReference>
<dbReference type="Gene3D" id="1.10.10.10">
    <property type="entry name" value="Winged helix-like DNA-binding domain superfamily/Winged helix DNA-binding domain"/>
    <property type="match status" value="1"/>
</dbReference>
<dbReference type="InterPro" id="IPR000418">
    <property type="entry name" value="Ets_dom"/>
</dbReference>
<dbReference type="InterPro" id="IPR046328">
    <property type="entry name" value="ETS_fam"/>
</dbReference>
<dbReference type="InterPro" id="IPR006715">
    <property type="entry name" value="ETS_PEA3_N"/>
</dbReference>
<dbReference type="InterPro" id="IPR036388">
    <property type="entry name" value="WH-like_DNA-bd_sf"/>
</dbReference>
<dbReference type="InterPro" id="IPR036390">
    <property type="entry name" value="WH_DNA-bd_sf"/>
</dbReference>
<dbReference type="PANTHER" id="PTHR11849">
    <property type="entry name" value="ETS"/>
    <property type="match status" value="1"/>
</dbReference>
<dbReference type="PANTHER" id="PTHR11849:SF196">
    <property type="entry name" value="ETS TRANSLOCATION VARIANT 1"/>
    <property type="match status" value="1"/>
</dbReference>
<dbReference type="Pfam" id="PF00178">
    <property type="entry name" value="Ets"/>
    <property type="match status" value="1"/>
</dbReference>
<dbReference type="Pfam" id="PF04621">
    <property type="entry name" value="ETS_PEA3_N"/>
    <property type="match status" value="1"/>
</dbReference>
<dbReference type="PRINTS" id="PR00454">
    <property type="entry name" value="ETSDOMAIN"/>
</dbReference>
<dbReference type="SMART" id="SM00413">
    <property type="entry name" value="ETS"/>
    <property type="match status" value="1"/>
</dbReference>
<dbReference type="SUPFAM" id="SSF46785">
    <property type="entry name" value="Winged helix' DNA-binding domain"/>
    <property type="match status" value="1"/>
</dbReference>
<dbReference type="PROSITE" id="PS00345">
    <property type="entry name" value="ETS_DOMAIN_1"/>
    <property type="match status" value="1"/>
</dbReference>
<dbReference type="PROSITE" id="PS00346">
    <property type="entry name" value="ETS_DOMAIN_2"/>
    <property type="match status" value="1"/>
</dbReference>
<dbReference type="PROSITE" id="PS50061">
    <property type="entry name" value="ETS_DOMAIN_3"/>
    <property type="match status" value="1"/>
</dbReference>